<protein>
    <recommendedName>
        <fullName evidence="1">4-diphosphocytidyl-2-C-methyl-D-erythritol kinase</fullName>
        <shortName evidence="1">CMK</shortName>
        <ecNumber evidence="1">2.7.1.148</ecNumber>
    </recommendedName>
    <alternativeName>
        <fullName evidence="1">4-(cytidine-5'-diphospho)-2-C-methyl-D-erythritol kinase</fullName>
    </alternativeName>
</protein>
<accession>Q6NIA1</accession>
<comment type="function">
    <text evidence="1">Catalyzes the phosphorylation of the position 2 hydroxy group of 4-diphosphocytidyl-2C-methyl-D-erythritol.</text>
</comment>
<comment type="catalytic activity">
    <reaction evidence="1">
        <text>4-CDP-2-C-methyl-D-erythritol + ATP = 4-CDP-2-C-methyl-D-erythritol 2-phosphate + ADP + H(+)</text>
        <dbReference type="Rhea" id="RHEA:18437"/>
        <dbReference type="ChEBI" id="CHEBI:15378"/>
        <dbReference type="ChEBI" id="CHEBI:30616"/>
        <dbReference type="ChEBI" id="CHEBI:57823"/>
        <dbReference type="ChEBI" id="CHEBI:57919"/>
        <dbReference type="ChEBI" id="CHEBI:456216"/>
        <dbReference type="EC" id="2.7.1.148"/>
    </reaction>
</comment>
<comment type="pathway">
    <text evidence="1">Isoprenoid biosynthesis; isopentenyl diphosphate biosynthesis via DXP pathway; isopentenyl diphosphate from 1-deoxy-D-xylulose 5-phosphate: step 3/6.</text>
</comment>
<comment type="similarity">
    <text evidence="1">Belongs to the GHMP kinase family. IspE subfamily.</text>
</comment>
<keyword id="KW-0067">ATP-binding</keyword>
<keyword id="KW-0414">Isoprene biosynthesis</keyword>
<keyword id="KW-0418">Kinase</keyword>
<keyword id="KW-0547">Nucleotide-binding</keyword>
<keyword id="KW-1185">Reference proteome</keyword>
<keyword id="KW-0808">Transferase</keyword>
<dbReference type="EC" id="2.7.1.148" evidence="1"/>
<dbReference type="EMBL" id="BX248356">
    <property type="protein sequence ID" value="CAE49393.1"/>
    <property type="molecule type" value="Genomic_DNA"/>
</dbReference>
<dbReference type="RefSeq" id="WP_010934631.1">
    <property type="nucleotide sequence ID" value="NC_002935.2"/>
</dbReference>
<dbReference type="SMR" id="Q6NIA1"/>
<dbReference type="STRING" id="257309.DIP0876"/>
<dbReference type="KEGG" id="cdi:DIP0876"/>
<dbReference type="PATRIC" id="fig|257309.4.peg.858"/>
<dbReference type="HOGENOM" id="CLU_053057_1_1_11"/>
<dbReference type="UniPathway" id="UPA00056">
    <property type="reaction ID" value="UER00094"/>
</dbReference>
<dbReference type="Proteomes" id="UP000002198">
    <property type="component" value="Chromosome"/>
</dbReference>
<dbReference type="GO" id="GO:0050515">
    <property type="term" value="F:4-(cytidine 5'-diphospho)-2-C-methyl-D-erythritol kinase activity"/>
    <property type="evidence" value="ECO:0007669"/>
    <property type="project" value="UniProtKB-UniRule"/>
</dbReference>
<dbReference type="GO" id="GO:0005524">
    <property type="term" value="F:ATP binding"/>
    <property type="evidence" value="ECO:0007669"/>
    <property type="project" value="UniProtKB-UniRule"/>
</dbReference>
<dbReference type="GO" id="GO:0019288">
    <property type="term" value="P:isopentenyl diphosphate biosynthetic process, methylerythritol 4-phosphate pathway"/>
    <property type="evidence" value="ECO:0007669"/>
    <property type="project" value="UniProtKB-UniRule"/>
</dbReference>
<dbReference type="GO" id="GO:0016114">
    <property type="term" value="P:terpenoid biosynthetic process"/>
    <property type="evidence" value="ECO:0007669"/>
    <property type="project" value="InterPro"/>
</dbReference>
<dbReference type="Gene3D" id="3.30.230.10">
    <property type="match status" value="1"/>
</dbReference>
<dbReference type="Gene3D" id="3.30.70.890">
    <property type="entry name" value="GHMP kinase, C-terminal domain"/>
    <property type="match status" value="1"/>
</dbReference>
<dbReference type="HAMAP" id="MF_00061">
    <property type="entry name" value="IspE"/>
    <property type="match status" value="1"/>
</dbReference>
<dbReference type="InterPro" id="IPR013750">
    <property type="entry name" value="GHMP_kinase_C_dom"/>
</dbReference>
<dbReference type="InterPro" id="IPR036554">
    <property type="entry name" value="GHMP_kinase_C_sf"/>
</dbReference>
<dbReference type="InterPro" id="IPR006204">
    <property type="entry name" value="GHMP_kinase_N_dom"/>
</dbReference>
<dbReference type="InterPro" id="IPR004424">
    <property type="entry name" value="IspE"/>
</dbReference>
<dbReference type="InterPro" id="IPR020568">
    <property type="entry name" value="Ribosomal_Su5_D2-typ_SF"/>
</dbReference>
<dbReference type="InterPro" id="IPR014721">
    <property type="entry name" value="Ribsml_uS5_D2-typ_fold_subgr"/>
</dbReference>
<dbReference type="NCBIfam" id="TIGR00154">
    <property type="entry name" value="ispE"/>
    <property type="match status" value="1"/>
</dbReference>
<dbReference type="NCBIfam" id="NF002870">
    <property type="entry name" value="PRK03188.1"/>
    <property type="match status" value="1"/>
</dbReference>
<dbReference type="PANTHER" id="PTHR43527">
    <property type="entry name" value="4-DIPHOSPHOCYTIDYL-2-C-METHYL-D-ERYTHRITOL KINASE, CHLOROPLASTIC"/>
    <property type="match status" value="1"/>
</dbReference>
<dbReference type="PANTHER" id="PTHR43527:SF2">
    <property type="entry name" value="4-DIPHOSPHOCYTIDYL-2-C-METHYL-D-ERYTHRITOL KINASE, CHLOROPLASTIC"/>
    <property type="match status" value="1"/>
</dbReference>
<dbReference type="Pfam" id="PF08544">
    <property type="entry name" value="GHMP_kinases_C"/>
    <property type="match status" value="1"/>
</dbReference>
<dbReference type="Pfam" id="PF00288">
    <property type="entry name" value="GHMP_kinases_N"/>
    <property type="match status" value="1"/>
</dbReference>
<dbReference type="PIRSF" id="PIRSF010376">
    <property type="entry name" value="IspE"/>
    <property type="match status" value="1"/>
</dbReference>
<dbReference type="SUPFAM" id="SSF55060">
    <property type="entry name" value="GHMP Kinase, C-terminal domain"/>
    <property type="match status" value="1"/>
</dbReference>
<dbReference type="SUPFAM" id="SSF54211">
    <property type="entry name" value="Ribosomal protein S5 domain 2-like"/>
    <property type="match status" value="1"/>
</dbReference>
<proteinExistence type="inferred from homology"/>
<evidence type="ECO:0000255" key="1">
    <source>
        <dbReference type="HAMAP-Rule" id="MF_00061"/>
    </source>
</evidence>
<name>ISPE_CORDI</name>
<sequence>MTSYAITAVASSKVNLHLGVGNARDDGYHELVTVFQSLSLHDTITVTPAADDMHDAEDQGIVATLSVSGDSAQAVPTDATNLAWQAAEKMYQAHRRNGGAPAKRVHIAIDKGIPVAGGMAGGSADAAATLAAMAQYLGNTNTEQEILSIAAELGSDVPFTYLGDTRLGTGRGEQLVPVLSRGTYHWALAFSAQGLSTPEVFRKIDQMDRQPHLDVTALNAALITGDPHKVAAHLHNDLQAAALSLRPELRTILEQGRAAGALAGIVSGSGPTCAFLCEDAETAQAVAAELSVHYRTAVATGPVRGAHVKGH</sequence>
<feature type="chain" id="PRO_0000189210" description="4-diphosphocytidyl-2-C-methyl-D-erythritol kinase">
    <location>
        <begin position="1"/>
        <end position="311"/>
    </location>
</feature>
<feature type="active site" evidence="1">
    <location>
        <position position="13"/>
    </location>
</feature>
<feature type="active site" evidence="1">
    <location>
        <position position="156"/>
    </location>
</feature>
<feature type="binding site" evidence="1">
    <location>
        <begin position="114"/>
        <end position="124"/>
    </location>
    <ligand>
        <name>ATP</name>
        <dbReference type="ChEBI" id="CHEBI:30616"/>
    </ligand>
</feature>
<gene>
    <name evidence="1" type="primary">ispE</name>
    <name type="ordered locus">DIP0876</name>
</gene>
<organism>
    <name type="scientific">Corynebacterium diphtheriae (strain ATCC 700971 / NCTC 13129 / Biotype gravis)</name>
    <dbReference type="NCBI Taxonomy" id="257309"/>
    <lineage>
        <taxon>Bacteria</taxon>
        <taxon>Bacillati</taxon>
        <taxon>Actinomycetota</taxon>
        <taxon>Actinomycetes</taxon>
        <taxon>Mycobacteriales</taxon>
        <taxon>Corynebacteriaceae</taxon>
        <taxon>Corynebacterium</taxon>
    </lineage>
</organism>
<reference key="1">
    <citation type="journal article" date="2003" name="Nucleic Acids Res.">
        <title>The complete genome sequence and analysis of Corynebacterium diphtheriae NCTC13129.</title>
        <authorList>
            <person name="Cerdeno-Tarraga A.-M."/>
            <person name="Efstratiou A."/>
            <person name="Dover L.G."/>
            <person name="Holden M.T.G."/>
            <person name="Pallen M.J."/>
            <person name="Bentley S.D."/>
            <person name="Besra G.S."/>
            <person name="Churcher C.M."/>
            <person name="James K.D."/>
            <person name="De Zoysa A."/>
            <person name="Chillingworth T."/>
            <person name="Cronin A."/>
            <person name="Dowd L."/>
            <person name="Feltwell T."/>
            <person name="Hamlin N."/>
            <person name="Holroyd S."/>
            <person name="Jagels K."/>
            <person name="Moule S."/>
            <person name="Quail M.A."/>
            <person name="Rabbinowitsch E."/>
            <person name="Rutherford K.M."/>
            <person name="Thomson N.R."/>
            <person name="Unwin L."/>
            <person name="Whitehead S."/>
            <person name="Barrell B.G."/>
            <person name="Parkhill J."/>
        </authorList>
    </citation>
    <scope>NUCLEOTIDE SEQUENCE [LARGE SCALE GENOMIC DNA]</scope>
    <source>
        <strain>ATCC 700971 / NCTC 13129 / Biotype gravis</strain>
    </source>
</reference>